<sequence length="330" mass="35166">MNTLGSGLKIIGSGTAIADQSLTNQDLSNIVETSDEWIQSRTGMRQRYICSAQENLASLGVKAGQKALAMAGLQPEDLDLIILATSTPDDLFGTAAQIQGGLGATRAFAFDITAACSGFVVGLNVAAQFLRTGVYQRVLIVGGDVLSRWVDWSDRTTCVLFGDGAGAVVLQRQAQDNLLAFEMYTDGTGNGCLNLSYQANPQPLTAEKTVAQGTYQAITMNGREVYRFAVAKVPEIIEKVLFKAQLTTSDLDWVILHQANQRIMDAVGDRLGIPSEKIISNVGEYGNTSAASIPLALDQAVREGKIKEGDLIALAGFGAGLTWAASIVRW</sequence>
<proteinExistence type="inferred from homology"/>
<keyword id="KW-0012">Acyltransferase</keyword>
<keyword id="KW-0963">Cytoplasm</keyword>
<keyword id="KW-0275">Fatty acid biosynthesis</keyword>
<keyword id="KW-0276">Fatty acid metabolism</keyword>
<keyword id="KW-0444">Lipid biosynthesis</keyword>
<keyword id="KW-0443">Lipid metabolism</keyword>
<keyword id="KW-0511">Multifunctional enzyme</keyword>
<keyword id="KW-1185">Reference proteome</keyword>
<keyword id="KW-0808">Transferase</keyword>
<feature type="chain" id="PRO_0000110498" description="Beta-ketoacyl-[acyl-carrier-protein] synthase III">
    <location>
        <begin position="1"/>
        <end position="330"/>
    </location>
</feature>
<feature type="region of interest" description="ACP-binding" evidence="1">
    <location>
        <begin position="258"/>
        <end position="262"/>
    </location>
</feature>
<feature type="active site" evidence="1">
    <location>
        <position position="116"/>
    </location>
</feature>
<feature type="active site" evidence="1">
    <location>
        <position position="257"/>
    </location>
</feature>
<feature type="active site" evidence="1">
    <location>
        <position position="287"/>
    </location>
</feature>
<evidence type="ECO:0000255" key="1">
    <source>
        <dbReference type="HAMAP-Rule" id="MF_01815"/>
    </source>
</evidence>
<evidence type="ECO:0000305" key="2"/>
<protein>
    <recommendedName>
        <fullName evidence="1">Beta-ketoacyl-[acyl-carrier-protein] synthase III</fullName>
        <shortName evidence="1">Beta-ketoacyl-ACP synthase III</shortName>
        <shortName evidence="1">KAS III</shortName>
        <ecNumber evidence="1">2.3.1.180</ecNumber>
    </recommendedName>
    <alternativeName>
        <fullName evidence="1">3-oxoacyl-[acyl-carrier-protein] synthase 3</fullName>
    </alternativeName>
    <alternativeName>
        <fullName evidence="1">3-oxoacyl-[acyl-carrier-protein] synthase III</fullName>
    </alternativeName>
</protein>
<gene>
    <name evidence="1" type="primary">fabH</name>
    <name type="ordered locus">slr1511</name>
</gene>
<reference key="1">
    <citation type="journal article" date="1996" name="DNA Res.">
        <title>Sequence analysis of the genome of the unicellular cyanobacterium Synechocystis sp. strain PCC6803. II. Sequence determination of the entire genome and assignment of potential protein-coding regions.</title>
        <authorList>
            <person name="Kaneko T."/>
            <person name="Sato S."/>
            <person name="Kotani H."/>
            <person name="Tanaka A."/>
            <person name="Asamizu E."/>
            <person name="Nakamura Y."/>
            <person name="Miyajima N."/>
            <person name="Hirosawa M."/>
            <person name="Sugiura M."/>
            <person name="Sasamoto S."/>
            <person name="Kimura T."/>
            <person name="Hosouchi T."/>
            <person name="Matsuno A."/>
            <person name="Muraki A."/>
            <person name="Nakazaki N."/>
            <person name="Naruo K."/>
            <person name="Okumura S."/>
            <person name="Shimpo S."/>
            <person name="Takeuchi C."/>
            <person name="Wada T."/>
            <person name="Watanabe A."/>
            <person name="Yamada M."/>
            <person name="Yasuda M."/>
            <person name="Tabata S."/>
        </authorList>
    </citation>
    <scope>NUCLEOTIDE SEQUENCE [LARGE SCALE GENOMIC DNA]</scope>
    <source>
        <strain>ATCC 27184 / PCC 6803 / Kazusa</strain>
    </source>
</reference>
<accession>P73951</accession>
<organism>
    <name type="scientific">Synechocystis sp. (strain ATCC 27184 / PCC 6803 / Kazusa)</name>
    <dbReference type="NCBI Taxonomy" id="1111708"/>
    <lineage>
        <taxon>Bacteria</taxon>
        <taxon>Bacillati</taxon>
        <taxon>Cyanobacteriota</taxon>
        <taxon>Cyanophyceae</taxon>
        <taxon>Synechococcales</taxon>
        <taxon>Merismopediaceae</taxon>
        <taxon>Synechocystis</taxon>
    </lineage>
</organism>
<dbReference type="EC" id="2.3.1.180" evidence="1"/>
<dbReference type="EMBL" id="BA000022">
    <property type="protein sequence ID" value="BAA18018.1"/>
    <property type="status" value="ALT_INIT"/>
    <property type="molecule type" value="Genomic_DNA"/>
</dbReference>
<dbReference type="PIR" id="S75457">
    <property type="entry name" value="S75457"/>
</dbReference>
<dbReference type="SMR" id="P73951"/>
<dbReference type="FunCoup" id="P73951">
    <property type="interactions" value="434"/>
</dbReference>
<dbReference type="IntAct" id="P73951">
    <property type="interactions" value="3"/>
</dbReference>
<dbReference type="STRING" id="1148.gene:10498888"/>
<dbReference type="PaxDb" id="1148-1653102"/>
<dbReference type="EnsemblBacteria" id="BAA18018">
    <property type="protein sequence ID" value="BAA18018"/>
    <property type="gene ID" value="BAA18018"/>
</dbReference>
<dbReference type="KEGG" id="syn:slr1511"/>
<dbReference type="eggNOG" id="COG0332">
    <property type="taxonomic scope" value="Bacteria"/>
</dbReference>
<dbReference type="InParanoid" id="P73951"/>
<dbReference type="PhylomeDB" id="P73951"/>
<dbReference type="UniPathway" id="UPA00094"/>
<dbReference type="Proteomes" id="UP000001425">
    <property type="component" value="Chromosome"/>
</dbReference>
<dbReference type="GO" id="GO:0005737">
    <property type="term" value="C:cytoplasm"/>
    <property type="evidence" value="ECO:0007669"/>
    <property type="project" value="UniProtKB-SubCell"/>
</dbReference>
<dbReference type="GO" id="GO:0004315">
    <property type="term" value="F:3-oxoacyl-[acyl-carrier-protein] synthase activity"/>
    <property type="evidence" value="ECO:0007669"/>
    <property type="project" value="InterPro"/>
</dbReference>
<dbReference type="GO" id="GO:0033818">
    <property type="term" value="F:beta-ketoacyl-acyl-carrier-protein synthase III activity"/>
    <property type="evidence" value="ECO:0007669"/>
    <property type="project" value="UniProtKB-UniRule"/>
</dbReference>
<dbReference type="GO" id="GO:0006633">
    <property type="term" value="P:fatty acid biosynthetic process"/>
    <property type="evidence" value="ECO:0007669"/>
    <property type="project" value="UniProtKB-UniRule"/>
</dbReference>
<dbReference type="CDD" id="cd00830">
    <property type="entry name" value="KAS_III"/>
    <property type="match status" value="1"/>
</dbReference>
<dbReference type="FunFam" id="3.40.47.10:FF:000004">
    <property type="entry name" value="3-oxoacyl-[acyl-carrier-protein] synthase 3"/>
    <property type="match status" value="1"/>
</dbReference>
<dbReference type="Gene3D" id="3.40.47.10">
    <property type="match status" value="1"/>
</dbReference>
<dbReference type="HAMAP" id="MF_01815">
    <property type="entry name" value="FabH"/>
    <property type="match status" value="1"/>
</dbReference>
<dbReference type="InterPro" id="IPR013747">
    <property type="entry name" value="ACP_syn_III_C"/>
</dbReference>
<dbReference type="InterPro" id="IPR013751">
    <property type="entry name" value="ACP_syn_III_N"/>
</dbReference>
<dbReference type="InterPro" id="IPR004655">
    <property type="entry name" value="FabH"/>
</dbReference>
<dbReference type="InterPro" id="IPR016039">
    <property type="entry name" value="Thiolase-like"/>
</dbReference>
<dbReference type="NCBIfam" id="TIGR00747">
    <property type="entry name" value="fabH"/>
    <property type="match status" value="1"/>
</dbReference>
<dbReference type="NCBIfam" id="NF006829">
    <property type="entry name" value="PRK09352.1"/>
    <property type="match status" value="1"/>
</dbReference>
<dbReference type="PANTHER" id="PTHR43091">
    <property type="entry name" value="3-OXOACYL-[ACYL-CARRIER-PROTEIN] SYNTHASE"/>
    <property type="match status" value="1"/>
</dbReference>
<dbReference type="PANTHER" id="PTHR43091:SF1">
    <property type="entry name" value="BETA-KETOACYL-[ACYL-CARRIER-PROTEIN] SYNTHASE III, CHLOROPLASTIC"/>
    <property type="match status" value="1"/>
</dbReference>
<dbReference type="Pfam" id="PF08545">
    <property type="entry name" value="ACP_syn_III"/>
    <property type="match status" value="1"/>
</dbReference>
<dbReference type="Pfam" id="PF08541">
    <property type="entry name" value="ACP_syn_III_C"/>
    <property type="match status" value="1"/>
</dbReference>
<dbReference type="SUPFAM" id="SSF53901">
    <property type="entry name" value="Thiolase-like"/>
    <property type="match status" value="1"/>
</dbReference>
<comment type="function">
    <text evidence="1">Catalyzes the condensation reaction of fatty acid synthesis by the addition to an acyl acceptor of two carbons from malonyl-ACP. Catalyzes the first condensation reaction which initiates fatty acid synthesis and may therefore play a role in governing the total rate of fatty acid production. Possesses both acetoacetyl-ACP synthase and acetyl transacylase activities. Its substrate specificity determines the biosynthesis of branched-chain and/or straight-chain of fatty acids.</text>
</comment>
<comment type="catalytic activity">
    <reaction evidence="1">
        <text>malonyl-[ACP] + acetyl-CoA + H(+) = 3-oxobutanoyl-[ACP] + CO2 + CoA</text>
        <dbReference type="Rhea" id="RHEA:12080"/>
        <dbReference type="Rhea" id="RHEA-COMP:9623"/>
        <dbReference type="Rhea" id="RHEA-COMP:9625"/>
        <dbReference type="ChEBI" id="CHEBI:15378"/>
        <dbReference type="ChEBI" id="CHEBI:16526"/>
        <dbReference type="ChEBI" id="CHEBI:57287"/>
        <dbReference type="ChEBI" id="CHEBI:57288"/>
        <dbReference type="ChEBI" id="CHEBI:78449"/>
        <dbReference type="ChEBI" id="CHEBI:78450"/>
        <dbReference type="EC" id="2.3.1.180"/>
    </reaction>
</comment>
<comment type="pathway">
    <text evidence="1">Lipid metabolism; fatty acid biosynthesis.</text>
</comment>
<comment type="subunit">
    <text evidence="1">Homodimer.</text>
</comment>
<comment type="subcellular location">
    <subcellularLocation>
        <location evidence="1">Cytoplasm</location>
    </subcellularLocation>
</comment>
<comment type="domain">
    <text evidence="1">The last Arg residue of the ACP-binding site is essential for the weak association between ACP/AcpP and FabH.</text>
</comment>
<comment type="similarity">
    <text evidence="1">Belongs to the thiolase-like superfamily. FabH family.</text>
</comment>
<comment type="sequence caution" evidence="2">
    <conflict type="erroneous initiation">
        <sequence resource="EMBL-CDS" id="BAA18018"/>
    </conflict>
</comment>
<name>FABH_SYNY3</name>